<evidence type="ECO:0000255" key="1">
    <source>
        <dbReference type="HAMAP-Rule" id="MF_00440"/>
    </source>
</evidence>
<gene>
    <name evidence="1" type="primary">nrdR</name>
    <name type="ordered locus">HAPS_0172</name>
</gene>
<keyword id="KW-0067">ATP-binding</keyword>
<keyword id="KW-0238">DNA-binding</keyword>
<keyword id="KW-0479">Metal-binding</keyword>
<keyword id="KW-0547">Nucleotide-binding</keyword>
<keyword id="KW-1185">Reference proteome</keyword>
<keyword id="KW-0678">Repressor</keyword>
<keyword id="KW-0804">Transcription</keyword>
<keyword id="KW-0805">Transcription regulation</keyword>
<keyword id="KW-0862">Zinc</keyword>
<keyword id="KW-0863">Zinc-finger</keyword>
<organism>
    <name type="scientific">Glaesserella parasuis serovar 5 (strain SH0165)</name>
    <name type="common">Haemophilus parasuis</name>
    <dbReference type="NCBI Taxonomy" id="557723"/>
    <lineage>
        <taxon>Bacteria</taxon>
        <taxon>Pseudomonadati</taxon>
        <taxon>Pseudomonadota</taxon>
        <taxon>Gammaproteobacteria</taxon>
        <taxon>Pasteurellales</taxon>
        <taxon>Pasteurellaceae</taxon>
        <taxon>Glaesserella</taxon>
    </lineage>
</organism>
<dbReference type="EMBL" id="CP001321">
    <property type="protein sequence ID" value="ACL31868.1"/>
    <property type="molecule type" value="Genomic_DNA"/>
</dbReference>
<dbReference type="RefSeq" id="WP_010785800.1">
    <property type="nucleotide sequence ID" value="NC_011852.1"/>
</dbReference>
<dbReference type="SMR" id="B8F3G6"/>
<dbReference type="STRING" id="557723.HAPS_0172"/>
<dbReference type="GeneID" id="66618564"/>
<dbReference type="KEGG" id="hap:HAPS_0172"/>
<dbReference type="HOGENOM" id="CLU_108412_0_0_6"/>
<dbReference type="Proteomes" id="UP000006743">
    <property type="component" value="Chromosome"/>
</dbReference>
<dbReference type="GO" id="GO:0005524">
    <property type="term" value="F:ATP binding"/>
    <property type="evidence" value="ECO:0007669"/>
    <property type="project" value="UniProtKB-KW"/>
</dbReference>
<dbReference type="GO" id="GO:0003677">
    <property type="term" value="F:DNA binding"/>
    <property type="evidence" value="ECO:0007669"/>
    <property type="project" value="UniProtKB-KW"/>
</dbReference>
<dbReference type="GO" id="GO:0008270">
    <property type="term" value="F:zinc ion binding"/>
    <property type="evidence" value="ECO:0007669"/>
    <property type="project" value="UniProtKB-UniRule"/>
</dbReference>
<dbReference type="GO" id="GO:0045892">
    <property type="term" value="P:negative regulation of DNA-templated transcription"/>
    <property type="evidence" value="ECO:0007669"/>
    <property type="project" value="UniProtKB-UniRule"/>
</dbReference>
<dbReference type="HAMAP" id="MF_00440">
    <property type="entry name" value="NrdR"/>
    <property type="match status" value="1"/>
</dbReference>
<dbReference type="InterPro" id="IPR005144">
    <property type="entry name" value="ATP-cone_dom"/>
</dbReference>
<dbReference type="InterPro" id="IPR055173">
    <property type="entry name" value="NrdR-like_N"/>
</dbReference>
<dbReference type="InterPro" id="IPR003796">
    <property type="entry name" value="RNR_NrdR-like"/>
</dbReference>
<dbReference type="NCBIfam" id="TIGR00244">
    <property type="entry name" value="transcriptional regulator NrdR"/>
    <property type="match status" value="1"/>
</dbReference>
<dbReference type="PANTHER" id="PTHR30455">
    <property type="entry name" value="TRANSCRIPTIONAL REPRESSOR NRDR"/>
    <property type="match status" value="1"/>
</dbReference>
<dbReference type="PANTHER" id="PTHR30455:SF2">
    <property type="entry name" value="TRANSCRIPTIONAL REPRESSOR NRDR"/>
    <property type="match status" value="1"/>
</dbReference>
<dbReference type="Pfam" id="PF03477">
    <property type="entry name" value="ATP-cone"/>
    <property type="match status" value="1"/>
</dbReference>
<dbReference type="Pfam" id="PF22811">
    <property type="entry name" value="Zn_ribbon_NrdR"/>
    <property type="match status" value="1"/>
</dbReference>
<dbReference type="PROSITE" id="PS51161">
    <property type="entry name" value="ATP_CONE"/>
    <property type="match status" value="1"/>
</dbReference>
<name>NRDR_GLAP5</name>
<accession>B8F3G6</accession>
<feature type="chain" id="PRO_1000191799" description="Transcriptional repressor NrdR">
    <location>
        <begin position="1"/>
        <end position="149"/>
    </location>
</feature>
<feature type="domain" description="ATP-cone" evidence="1">
    <location>
        <begin position="49"/>
        <end position="139"/>
    </location>
</feature>
<feature type="zinc finger region" evidence="1">
    <location>
        <begin position="3"/>
        <end position="34"/>
    </location>
</feature>
<protein>
    <recommendedName>
        <fullName evidence="1">Transcriptional repressor NrdR</fullName>
    </recommendedName>
</protein>
<reference key="1">
    <citation type="journal article" date="2009" name="J. Bacteriol.">
        <title>Complete genome sequence of Haemophilus parasuis SH0165.</title>
        <authorList>
            <person name="Yue M."/>
            <person name="Yang F."/>
            <person name="Yang J."/>
            <person name="Bei W."/>
            <person name="Cai X."/>
            <person name="Chen L."/>
            <person name="Dong J."/>
            <person name="Zhou R."/>
            <person name="Jin M."/>
            <person name="Jin Q."/>
            <person name="Chen H."/>
        </authorList>
    </citation>
    <scope>NUCLEOTIDE SEQUENCE [LARGE SCALE GENOMIC DNA]</scope>
    <source>
        <strain>SH0165</strain>
    </source>
</reference>
<comment type="function">
    <text evidence="1">Negatively regulates transcription of bacterial ribonucleotide reductase nrd genes and operons by binding to NrdR-boxes.</text>
</comment>
<comment type="cofactor">
    <cofactor evidence="1">
        <name>Zn(2+)</name>
        <dbReference type="ChEBI" id="CHEBI:29105"/>
    </cofactor>
    <text evidence="1">Binds 1 zinc ion.</text>
</comment>
<comment type="similarity">
    <text evidence="1">Belongs to the NrdR family.</text>
</comment>
<sequence>MRCPFCATDDTKVVDSRLTADGYQIRRRRECPVCKERFTTFESAELLIPHIVKNNGSREPFDERKLRTSLSRALEKRPVSTDDVEQAIHRIVLQLQATGEREVASKFVGDLVLGELKSLDKVAYIRFASVYLSFDDVEEFSKEIERLRN</sequence>
<proteinExistence type="inferred from homology"/>